<feature type="chain" id="PRO_0000217797" description="Photosystem I assembly protein Ycf3">
    <location>
        <begin position="1"/>
        <end position="172"/>
    </location>
</feature>
<feature type="repeat" description="TPR 1">
    <location>
        <begin position="35"/>
        <end position="68"/>
    </location>
</feature>
<feature type="repeat" description="TPR 2">
    <location>
        <begin position="72"/>
        <end position="105"/>
    </location>
</feature>
<feature type="repeat" description="TPR 3">
    <location>
        <begin position="120"/>
        <end position="153"/>
    </location>
</feature>
<name>YCF3_CHLRE</name>
<keyword id="KW-0150">Chloroplast</keyword>
<keyword id="KW-0472">Membrane</keyword>
<keyword id="KW-0602">Photosynthesis</keyword>
<keyword id="KW-0934">Plastid</keyword>
<keyword id="KW-1185">Reference proteome</keyword>
<keyword id="KW-0677">Repeat</keyword>
<keyword id="KW-0793">Thylakoid</keyword>
<keyword id="KW-0802">TPR repeat</keyword>
<accession>O20031</accession>
<reference key="1">
    <citation type="journal article" date="1997" name="EMBO J.">
        <title>The chloroplast ycf3 and ycf4 open reading frames of Chlamydomonas reinhardtii are required for the accumulation of the photosystem I complex.</title>
        <authorList>
            <person name="Boudreau E."/>
            <person name="Takahashi Y."/>
            <person name="Lemieux C."/>
            <person name="Turmel M."/>
            <person name="Rochaix J.-D."/>
        </authorList>
    </citation>
    <scope>NUCLEOTIDE SEQUENCE [GENOMIC DNA]</scope>
    <scope>CHARACTERIZATION</scope>
</reference>
<reference key="2">
    <citation type="journal article" date="2009" name="BMC Evol. Biol.">
        <title>Nucleotide diversity of the Chlamydomonas reinhardtii plastid genome: addressing the mutational-hazard hypothesis.</title>
        <authorList>
            <person name="Smith D.R."/>
            <person name="Lee R.W."/>
        </authorList>
    </citation>
    <scope>NUCLEOTIDE SEQUENCE [LARGE SCALE GENOMIC DNA]</scope>
    <source>
        <strain>CC-503</strain>
    </source>
</reference>
<reference key="3">
    <citation type="journal article" date="2002" name="Plant Cell">
        <title>The Chlamydomonas reinhardtii plastid chromosome: islands of genes in a sea of repeats.</title>
        <authorList>
            <person name="Maul J.E."/>
            <person name="Lilly J.W."/>
            <person name="Cui L."/>
            <person name="dePamphilis C.W."/>
            <person name="Miller W."/>
            <person name="Harris E.H."/>
            <person name="Stern D.B."/>
        </authorList>
    </citation>
    <scope>IDENTIFICATION</scope>
    <scope>COMPLETE PLASTID GENOME</scope>
</reference>
<gene>
    <name evidence="1" type="primary">ycf3</name>
</gene>
<protein>
    <recommendedName>
        <fullName evidence="1">Photosystem I assembly protein Ycf3</fullName>
    </recommendedName>
</protein>
<dbReference type="EMBL" id="Y13655">
    <property type="protein sequence ID" value="CAA74008.1"/>
    <property type="molecule type" value="Genomic_DNA"/>
</dbReference>
<dbReference type="EMBL" id="FJ423446">
    <property type="status" value="NOT_ANNOTATED_CDS"/>
    <property type="molecule type" value="Genomic_DNA"/>
</dbReference>
<dbReference type="EMBL" id="BK000554">
    <property type="protein sequence ID" value="DAA00938.1"/>
    <property type="molecule type" value="Genomic_DNA"/>
</dbReference>
<dbReference type="PIR" id="T07996">
    <property type="entry name" value="T07996"/>
</dbReference>
<dbReference type="RefSeq" id="NP_958393.1">
    <property type="nucleotide sequence ID" value="NC_005353.1"/>
</dbReference>
<dbReference type="SMR" id="O20031"/>
<dbReference type="FunCoup" id="O20031">
    <property type="interactions" value="11"/>
</dbReference>
<dbReference type="IntAct" id="O20031">
    <property type="interactions" value="6"/>
</dbReference>
<dbReference type="STRING" id="3055.O20031"/>
<dbReference type="PaxDb" id="3055-DAA00938"/>
<dbReference type="GeneID" id="2717008"/>
<dbReference type="KEGG" id="cre:ChreCp037"/>
<dbReference type="eggNOG" id="KOG1124">
    <property type="taxonomic scope" value="Eukaryota"/>
</dbReference>
<dbReference type="HOGENOM" id="CLU_141248_0_0_1"/>
<dbReference type="InParanoid" id="O20031"/>
<dbReference type="BioCyc" id="MetaCyc:MONOMER-16598"/>
<dbReference type="Proteomes" id="UP000006906">
    <property type="component" value="Chloroplast"/>
</dbReference>
<dbReference type="GO" id="GO:0009535">
    <property type="term" value="C:chloroplast thylakoid membrane"/>
    <property type="evidence" value="ECO:0007669"/>
    <property type="project" value="UniProtKB-SubCell"/>
</dbReference>
<dbReference type="GO" id="GO:0009579">
    <property type="term" value="C:thylakoid"/>
    <property type="evidence" value="ECO:0000314"/>
    <property type="project" value="UniProtKB"/>
</dbReference>
<dbReference type="GO" id="GO:0048564">
    <property type="term" value="P:photosystem I assembly"/>
    <property type="evidence" value="ECO:0000314"/>
    <property type="project" value="UniProtKB"/>
</dbReference>
<dbReference type="Gene3D" id="1.25.40.10">
    <property type="entry name" value="Tetratricopeptide repeat domain"/>
    <property type="match status" value="1"/>
</dbReference>
<dbReference type="HAMAP" id="MF_00439">
    <property type="entry name" value="Ycf3"/>
    <property type="match status" value="1"/>
</dbReference>
<dbReference type="InterPro" id="IPR022818">
    <property type="entry name" value="PSI_Ycf3_assembly"/>
</dbReference>
<dbReference type="InterPro" id="IPR011990">
    <property type="entry name" value="TPR-like_helical_dom_sf"/>
</dbReference>
<dbReference type="InterPro" id="IPR019734">
    <property type="entry name" value="TPR_rpt"/>
</dbReference>
<dbReference type="NCBIfam" id="NF002725">
    <property type="entry name" value="PRK02603.1"/>
    <property type="match status" value="1"/>
</dbReference>
<dbReference type="Pfam" id="PF00515">
    <property type="entry name" value="TPR_1"/>
    <property type="match status" value="1"/>
</dbReference>
<dbReference type="SMART" id="SM00028">
    <property type="entry name" value="TPR"/>
    <property type="match status" value="3"/>
</dbReference>
<dbReference type="SUPFAM" id="SSF48452">
    <property type="entry name" value="TPR-like"/>
    <property type="match status" value="1"/>
</dbReference>
<dbReference type="PROSITE" id="PS50005">
    <property type="entry name" value="TPR"/>
    <property type="match status" value="3"/>
</dbReference>
<dbReference type="PROSITE" id="PS50293">
    <property type="entry name" value="TPR_REGION"/>
    <property type="match status" value="1"/>
</dbReference>
<comment type="function">
    <text evidence="2">Essential for the assembly of the photosystem I (PSI) complex. May act as a chaperone-like factor to guide the assembly of the PSI subunits.</text>
</comment>
<comment type="interaction">
    <interactant intactId="EBI-601871">
        <id>O20031</id>
    </interactant>
    <interactant intactId="EBI-601796">
        <id>P12154</id>
        <label>psaA</label>
    </interactant>
    <organismsDiffer>false</organismsDiffer>
    <experiments>3</experiments>
</comment>
<comment type="interaction">
    <interactant intactId="EBI-601871">
        <id>O20031</id>
    </interactant>
    <interactant intactId="EBI-601809">
        <id>Q39615</id>
        <label>psaD</label>
    </interactant>
    <organismsDiffer>false</organismsDiffer>
    <experiments>4</experiments>
</comment>
<comment type="subcellular location">
    <subcellularLocation>
        <location evidence="1">Plastid</location>
        <location evidence="1">Chloroplast thylakoid membrane</location>
        <topology evidence="1">Peripheral membrane protein</topology>
    </subcellularLocation>
</comment>
<comment type="similarity">
    <text evidence="1">Belongs to the Ycf3 family.</text>
</comment>
<organism>
    <name type="scientific">Chlamydomonas reinhardtii</name>
    <name type="common">Chlamydomonas smithii</name>
    <dbReference type="NCBI Taxonomy" id="3055"/>
    <lineage>
        <taxon>Eukaryota</taxon>
        <taxon>Viridiplantae</taxon>
        <taxon>Chlorophyta</taxon>
        <taxon>core chlorophytes</taxon>
        <taxon>Chlorophyceae</taxon>
        <taxon>CS clade</taxon>
        <taxon>Chlamydomonadales</taxon>
        <taxon>Chlamydomonadaceae</taxon>
        <taxon>Chlamydomonas</taxon>
    </lineage>
</organism>
<sequence>MPRTQRNDNFIDKTFTVVADILLKVLPTSQREKQAFSYYRNGMSAQAEGEYAEALQNYYEAMRLEVDAYDRSYILYNIGLIHTSNGEHGRALEYYYQALERNPSLSSALNNIAVIYHYRGEQAIENGQSEISQILFEKAADYWKEAIRLAPTNYIEALNWLKMTGRLTGLAT</sequence>
<evidence type="ECO:0000255" key="1">
    <source>
        <dbReference type="HAMAP-Rule" id="MF_00439"/>
    </source>
</evidence>
<evidence type="ECO:0000269" key="2">
    <source>
    </source>
</evidence>
<geneLocation type="chloroplast"/>
<proteinExistence type="evidence at protein level"/>